<comment type="function">
    <text evidence="1">Catalyzes the methylthiolation of N6-(dimethylallyl)adenosine (i(6)A), leading to the formation of 2-methylthio-N6-(dimethylallyl)adenosine (ms(2)i(6)A) at position 37 in tRNAs that read codons beginning with uridine.</text>
</comment>
<comment type="catalytic activity">
    <reaction evidence="1">
        <text>N(6)-dimethylallyladenosine(37) in tRNA + (sulfur carrier)-SH + AH2 + 2 S-adenosyl-L-methionine = 2-methylsulfanyl-N(6)-dimethylallyladenosine(37) in tRNA + (sulfur carrier)-H + 5'-deoxyadenosine + L-methionine + A + S-adenosyl-L-homocysteine + 2 H(+)</text>
        <dbReference type="Rhea" id="RHEA:37067"/>
        <dbReference type="Rhea" id="RHEA-COMP:10375"/>
        <dbReference type="Rhea" id="RHEA-COMP:10376"/>
        <dbReference type="Rhea" id="RHEA-COMP:14737"/>
        <dbReference type="Rhea" id="RHEA-COMP:14739"/>
        <dbReference type="ChEBI" id="CHEBI:13193"/>
        <dbReference type="ChEBI" id="CHEBI:15378"/>
        <dbReference type="ChEBI" id="CHEBI:17319"/>
        <dbReference type="ChEBI" id="CHEBI:17499"/>
        <dbReference type="ChEBI" id="CHEBI:29917"/>
        <dbReference type="ChEBI" id="CHEBI:57844"/>
        <dbReference type="ChEBI" id="CHEBI:57856"/>
        <dbReference type="ChEBI" id="CHEBI:59789"/>
        <dbReference type="ChEBI" id="CHEBI:64428"/>
        <dbReference type="ChEBI" id="CHEBI:74415"/>
        <dbReference type="ChEBI" id="CHEBI:74417"/>
        <dbReference type="EC" id="2.8.4.3"/>
    </reaction>
</comment>
<comment type="cofactor">
    <cofactor evidence="1">
        <name>[4Fe-4S] cluster</name>
        <dbReference type="ChEBI" id="CHEBI:49883"/>
    </cofactor>
    <text evidence="1">Binds 2 [4Fe-4S] clusters. One cluster is coordinated with 3 cysteines and an exchangeable S-adenosyl-L-methionine.</text>
</comment>
<comment type="subunit">
    <text evidence="1">Monomer.</text>
</comment>
<comment type="subcellular location">
    <subcellularLocation>
        <location evidence="1">Cytoplasm</location>
    </subcellularLocation>
</comment>
<comment type="similarity">
    <text evidence="1">Belongs to the methylthiotransferase family. MiaB subfamily.</text>
</comment>
<keyword id="KW-0004">4Fe-4S</keyword>
<keyword id="KW-0963">Cytoplasm</keyword>
<keyword id="KW-0408">Iron</keyword>
<keyword id="KW-0411">Iron-sulfur</keyword>
<keyword id="KW-0479">Metal-binding</keyword>
<keyword id="KW-1185">Reference proteome</keyword>
<keyword id="KW-0949">S-adenosyl-L-methionine</keyword>
<keyword id="KW-0808">Transferase</keyword>
<keyword id="KW-0819">tRNA processing</keyword>
<reference key="1">
    <citation type="journal article" date="2007" name="Proc. Natl. Acad. Sci. U.S.A.">
        <title>Deep-sea vent epsilon-proteobacterial genomes provide insights into emergence of pathogens.</title>
        <authorList>
            <person name="Nakagawa S."/>
            <person name="Takaki Y."/>
            <person name="Shimamura S."/>
            <person name="Reysenbach A.-L."/>
            <person name="Takai K."/>
            <person name="Horikoshi K."/>
        </authorList>
    </citation>
    <scope>NUCLEOTIDE SEQUENCE [LARGE SCALE GENOMIC DNA]</scope>
    <source>
        <strain>SB155-2</strain>
    </source>
</reference>
<sequence length="433" mass="49586">MKKRLYIETLGCAMNVRDSEHIIAELTQKEDYELTQNLQEADLILINTCSVREKPVHKLFSEIGYFNKKKKEGAKIGVCGCTASHLGEEIIKKAPYVSFVLGARNVSKIRDVIKQEKAVEVDIDYDESTYAFSDFRTSPYKAFINISIGCDKKCTFCIVPNTRGEEISIPPELILQEVRRAVDTGAKEIFLLGQNVNNYGRSFSDKARKVDFTDLLRMVSEIDGVRRIRFTSPHPLHMDDKFLQEFATNPKICKSMHMPLQSGSTKVLRDMKRGYTKEWFLDRAMKLREMVPEVHISTDIIVGFPGESEEDFADTIDVVQKVRFEQIFSFKYSPRPLTPAKDYENQIPDEVASRRLSYLQDLHLQMLDSISEQEKDKVYEVYFEELKPGGYVAGRTDNNWIVKVKGSEELLGEFKSVRITKPGRLSLEGELVG</sequence>
<protein>
    <recommendedName>
        <fullName evidence="1">tRNA-2-methylthio-N(6)-dimethylallyladenosine synthase</fullName>
        <ecNumber evidence="1">2.8.4.3</ecNumber>
    </recommendedName>
    <alternativeName>
        <fullName evidence="1">(Dimethylallyl)adenosine tRNA methylthiotransferase MiaB</fullName>
    </alternativeName>
    <alternativeName>
        <fullName evidence="1">tRNA-i(6)A37 methylthiotransferase</fullName>
    </alternativeName>
</protein>
<organism>
    <name type="scientific">Nitratiruptor sp. (strain SB155-2)</name>
    <dbReference type="NCBI Taxonomy" id="387092"/>
    <lineage>
        <taxon>Bacteria</taxon>
        <taxon>Pseudomonadati</taxon>
        <taxon>Campylobacterota</taxon>
        <taxon>Epsilonproteobacteria</taxon>
        <taxon>Nautiliales</taxon>
        <taxon>Nitratiruptoraceae</taxon>
        <taxon>Nitratiruptor</taxon>
    </lineage>
</organism>
<gene>
    <name evidence="1" type="primary">miaB</name>
    <name type="ordered locus">NIS_1483</name>
</gene>
<feature type="chain" id="PRO_0000374407" description="tRNA-2-methylthio-N(6)-dimethylallyladenosine synthase">
    <location>
        <begin position="1"/>
        <end position="433"/>
    </location>
</feature>
<feature type="domain" description="MTTase N-terminal" evidence="1">
    <location>
        <begin position="3"/>
        <end position="118"/>
    </location>
</feature>
<feature type="domain" description="Radical SAM core" evidence="2">
    <location>
        <begin position="136"/>
        <end position="371"/>
    </location>
</feature>
<feature type="domain" description="TRAM" evidence="1">
    <location>
        <begin position="372"/>
        <end position="433"/>
    </location>
</feature>
<feature type="binding site" evidence="1">
    <location>
        <position position="12"/>
    </location>
    <ligand>
        <name>[4Fe-4S] cluster</name>
        <dbReference type="ChEBI" id="CHEBI:49883"/>
        <label>1</label>
    </ligand>
</feature>
<feature type="binding site" evidence="1">
    <location>
        <position position="49"/>
    </location>
    <ligand>
        <name>[4Fe-4S] cluster</name>
        <dbReference type="ChEBI" id="CHEBI:49883"/>
        <label>1</label>
    </ligand>
</feature>
<feature type="binding site" evidence="1">
    <location>
        <position position="81"/>
    </location>
    <ligand>
        <name>[4Fe-4S] cluster</name>
        <dbReference type="ChEBI" id="CHEBI:49883"/>
        <label>1</label>
    </ligand>
</feature>
<feature type="binding site" evidence="1">
    <location>
        <position position="150"/>
    </location>
    <ligand>
        <name>[4Fe-4S] cluster</name>
        <dbReference type="ChEBI" id="CHEBI:49883"/>
        <label>2</label>
        <note>4Fe-4S-S-AdoMet</note>
    </ligand>
</feature>
<feature type="binding site" evidence="1">
    <location>
        <position position="154"/>
    </location>
    <ligand>
        <name>[4Fe-4S] cluster</name>
        <dbReference type="ChEBI" id="CHEBI:49883"/>
        <label>2</label>
        <note>4Fe-4S-S-AdoMet</note>
    </ligand>
</feature>
<feature type="binding site" evidence="1">
    <location>
        <position position="157"/>
    </location>
    <ligand>
        <name>[4Fe-4S] cluster</name>
        <dbReference type="ChEBI" id="CHEBI:49883"/>
        <label>2</label>
        <note>4Fe-4S-S-AdoMet</note>
    </ligand>
</feature>
<name>MIAB_NITSB</name>
<proteinExistence type="inferred from homology"/>
<dbReference type="EC" id="2.8.4.3" evidence="1"/>
<dbReference type="EMBL" id="AP009178">
    <property type="protein sequence ID" value="BAF70590.1"/>
    <property type="molecule type" value="Genomic_DNA"/>
</dbReference>
<dbReference type="RefSeq" id="WP_012082853.1">
    <property type="nucleotide sequence ID" value="NC_009662.1"/>
</dbReference>
<dbReference type="SMR" id="A6Q531"/>
<dbReference type="FunCoup" id="A6Q531">
    <property type="interactions" value="471"/>
</dbReference>
<dbReference type="STRING" id="387092.NIS_1483"/>
<dbReference type="KEGG" id="nis:NIS_1483"/>
<dbReference type="eggNOG" id="COG0621">
    <property type="taxonomic scope" value="Bacteria"/>
</dbReference>
<dbReference type="HOGENOM" id="CLU_018697_2_0_7"/>
<dbReference type="InParanoid" id="A6Q531"/>
<dbReference type="OrthoDB" id="9805215at2"/>
<dbReference type="Proteomes" id="UP000001118">
    <property type="component" value="Chromosome"/>
</dbReference>
<dbReference type="GO" id="GO:0005829">
    <property type="term" value="C:cytosol"/>
    <property type="evidence" value="ECO:0007669"/>
    <property type="project" value="TreeGrafter"/>
</dbReference>
<dbReference type="GO" id="GO:0051539">
    <property type="term" value="F:4 iron, 4 sulfur cluster binding"/>
    <property type="evidence" value="ECO:0007669"/>
    <property type="project" value="UniProtKB-UniRule"/>
</dbReference>
<dbReference type="GO" id="GO:0046872">
    <property type="term" value="F:metal ion binding"/>
    <property type="evidence" value="ECO:0007669"/>
    <property type="project" value="UniProtKB-KW"/>
</dbReference>
<dbReference type="GO" id="GO:0035597">
    <property type="term" value="F:N6-isopentenyladenosine methylthiotransferase activity"/>
    <property type="evidence" value="ECO:0007669"/>
    <property type="project" value="TreeGrafter"/>
</dbReference>
<dbReference type="CDD" id="cd01335">
    <property type="entry name" value="Radical_SAM"/>
    <property type="match status" value="1"/>
</dbReference>
<dbReference type="FunFam" id="3.40.50.12160:FF:000003">
    <property type="entry name" value="CDK5 regulatory subunit-associated protein 1"/>
    <property type="match status" value="1"/>
</dbReference>
<dbReference type="FunFam" id="3.80.30.20:FF:000001">
    <property type="entry name" value="tRNA-2-methylthio-N(6)-dimethylallyladenosine synthase 2"/>
    <property type="match status" value="1"/>
</dbReference>
<dbReference type="Gene3D" id="3.40.50.12160">
    <property type="entry name" value="Methylthiotransferase, N-terminal domain"/>
    <property type="match status" value="1"/>
</dbReference>
<dbReference type="Gene3D" id="3.80.30.20">
    <property type="entry name" value="tm_1862 like domain"/>
    <property type="match status" value="1"/>
</dbReference>
<dbReference type="HAMAP" id="MF_01864">
    <property type="entry name" value="tRNA_metthiotr_MiaB"/>
    <property type="match status" value="1"/>
</dbReference>
<dbReference type="InterPro" id="IPR006638">
    <property type="entry name" value="Elp3/MiaA/NifB-like_rSAM"/>
</dbReference>
<dbReference type="InterPro" id="IPR005839">
    <property type="entry name" value="Methylthiotransferase"/>
</dbReference>
<dbReference type="InterPro" id="IPR020612">
    <property type="entry name" value="Methylthiotransferase_CS"/>
</dbReference>
<dbReference type="InterPro" id="IPR013848">
    <property type="entry name" value="Methylthiotransferase_N"/>
</dbReference>
<dbReference type="InterPro" id="IPR038135">
    <property type="entry name" value="Methylthiotransferase_N_sf"/>
</dbReference>
<dbReference type="InterPro" id="IPR006463">
    <property type="entry name" value="MiaB_methiolase"/>
</dbReference>
<dbReference type="InterPro" id="IPR007197">
    <property type="entry name" value="rSAM"/>
</dbReference>
<dbReference type="InterPro" id="IPR023404">
    <property type="entry name" value="rSAM_horseshoe"/>
</dbReference>
<dbReference type="InterPro" id="IPR002792">
    <property type="entry name" value="TRAM_dom"/>
</dbReference>
<dbReference type="NCBIfam" id="TIGR01574">
    <property type="entry name" value="miaB-methiolase"/>
    <property type="match status" value="1"/>
</dbReference>
<dbReference type="NCBIfam" id="TIGR00089">
    <property type="entry name" value="MiaB/RimO family radical SAM methylthiotransferase"/>
    <property type="match status" value="1"/>
</dbReference>
<dbReference type="PANTHER" id="PTHR43020">
    <property type="entry name" value="CDK5 REGULATORY SUBUNIT-ASSOCIATED PROTEIN 1"/>
    <property type="match status" value="1"/>
</dbReference>
<dbReference type="PANTHER" id="PTHR43020:SF2">
    <property type="entry name" value="MITOCHONDRIAL TRNA METHYLTHIOTRANSFERASE CDK5RAP1"/>
    <property type="match status" value="1"/>
</dbReference>
<dbReference type="Pfam" id="PF04055">
    <property type="entry name" value="Radical_SAM"/>
    <property type="match status" value="1"/>
</dbReference>
<dbReference type="Pfam" id="PF01938">
    <property type="entry name" value="TRAM"/>
    <property type="match status" value="1"/>
</dbReference>
<dbReference type="Pfam" id="PF00919">
    <property type="entry name" value="UPF0004"/>
    <property type="match status" value="1"/>
</dbReference>
<dbReference type="SFLD" id="SFLDF00273">
    <property type="entry name" value="(dimethylallyl)adenosine_tRNA"/>
    <property type="match status" value="1"/>
</dbReference>
<dbReference type="SFLD" id="SFLDG01082">
    <property type="entry name" value="B12-binding_domain_containing"/>
    <property type="match status" value="1"/>
</dbReference>
<dbReference type="SFLD" id="SFLDG01061">
    <property type="entry name" value="methylthiotransferase"/>
    <property type="match status" value="1"/>
</dbReference>
<dbReference type="SMART" id="SM00729">
    <property type="entry name" value="Elp3"/>
    <property type="match status" value="1"/>
</dbReference>
<dbReference type="SUPFAM" id="SSF102114">
    <property type="entry name" value="Radical SAM enzymes"/>
    <property type="match status" value="1"/>
</dbReference>
<dbReference type="PROSITE" id="PS51449">
    <property type="entry name" value="MTTASE_N"/>
    <property type="match status" value="1"/>
</dbReference>
<dbReference type="PROSITE" id="PS01278">
    <property type="entry name" value="MTTASE_RADICAL"/>
    <property type="match status" value="1"/>
</dbReference>
<dbReference type="PROSITE" id="PS51918">
    <property type="entry name" value="RADICAL_SAM"/>
    <property type="match status" value="1"/>
</dbReference>
<dbReference type="PROSITE" id="PS50926">
    <property type="entry name" value="TRAM"/>
    <property type="match status" value="1"/>
</dbReference>
<evidence type="ECO:0000255" key="1">
    <source>
        <dbReference type="HAMAP-Rule" id="MF_01864"/>
    </source>
</evidence>
<evidence type="ECO:0000255" key="2">
    <source>
        <dbReference type="PROSITE-ProRule" id="PRU01266"/>
    </source>
</evidence>
<accession>A6Q531</accession>